<keyword id="KW-0963">Cytoplasm</keyword>
<keyword id="KW-0413">Isomerase</keyword>
<keyword id="KW-0627">Porphyrin biosynthesis</keyword>
<keyword id="KW-0663">Pyridoxal phosphate</keyword>
<proteinExistence type="inferred from homology"/>
<organism>
    <name type="scientific">Legionella pneumophila (strain Corby)</name>
    <dbReference type="NCBI Taxonomy" id="400673"/>
    <lineage>
        <taxon>Bacteria</taxon>
        <taxon>Pseudomonadati</taxon>
        <taxon>Pseudomonadota</taxon>
        <taxon>Gammaproteobacteria</taxon>
        <taxon>Legionellales</taxon>
        <taxon>Legionellaceae</taxon>
        <taxon>Legionella</taxon>
    </lineage>
</organism>
<reference key="1">
    <citation type="submission" date="2006-11" db="EMBL/GenBank/DDBJ databases">
        <title>Identification and characterization of a new conjugation/ type IVA secretion system (trb/tra) of L. pneumophila Corby localized on a mobile genomic island.</title>
        <authorList>
            <person name="Gloeckner G."/>
            <person name="Albert-Weissenberger C."/>
            <person name="Weinmann E."/>
            <person name="Jacobi S."/>
            <person name="Schunder E."/>
            <person name="Steinert M."/>
            <person name="Buchrieser C."/>
            <person name="Hacker J."/>
            <person name="Heuner K."/>
        </authorList>
    </citation>
    <scope>NUCLEOTIDE SEQUENCE [LARGE SCALE GENOMIC DNA]</scope>
    <source>
        <strain>Corby</strain>
    </source>
</reference>
<sequence>MSRSSDLFHKAQTIIPGGVNSPVRAFKGVGGEPVFFKSGKGAYLTDVDDKQYIDYVGSWGPLILGHCHPKVIEAVDNVLHSGMSFGAPTELEIQLAEKIASLMPSIEKIRMVNSGTEATMTAIRLARGFTNKNKFIKFNGCYHGHSDSLLVKAGSGLLTLGIPSTPGIPQSITEHTLTADFNNLEQVAQLFEKYPNDIATVILEPVPGNMGFILPKIEFLKGLRELCDQYNALLIFDEVMTGFRVGLHGAQGLFGIKPDITTLGKIIGGGMPVGALGGKREIMSFLAPEGPVYQAGTLSGNPLAMAAGLATLKEIEKINFFEDLSNATNKLTEALADAAENANIPFFAASLGGMFGFCFTDKNSVENYLDVASSDEVLFKKFFHAMLAQGVYFAPSMYEAGFVSSMHGDLEIQKTYDAAELVLNQLKSA</sequence>
<feature type="chain" id="PRO_1000059994" description="Glutamate-1-semialdehyde 2,1-aminomutase">
    <location>
        <begin position="1"/>
        <end position="429"/>
    </location>
</feature>
<feature type="modified residue" description="N6-(pyridoxal phosphate)lysine" evidence="1">
    <location>
        <position position="265"/>
    </location>
</feature>
<evidence type="ECO:0000255" key="1">
    <source>
        <dbReference type="HAMAP-Rule" id="MF_00375"/>
    </source>
</evidence>
<accession>A5IC29</accession>
<name>GSA_LEGPC</name>
<protein>
    <recommendedName>
        <fullName evidence="1">Glutamate-1-semialdehyde 2,1-aminomutase</fullName>
        <shortName evidence="1">GSA</shortName>
        <ecNumber evidence="1">5.4.3.8</ecNumber>
    </recommendedName>
    <alternativeName>
        <fullName evidence="1">Glutamate-1-semialdehyde aminotransferase</fullName>
        <shortName evidence="1">GSA-AT</shortName>
    </alternativeName>
</protein>
<dbReference type="EC" id="5.4.3.8" evidence="1"/>
<dbReference type="EMBL" id="CP000675">
    <property type="protein sequence ID" value="ABQ54929.1"/>
    <property type="molecule type" value="Genomic_DNA"/>
</dbReference>
<dbReference type="RefSeq" id="WP_011946535.1">
    <property type="nucleotide sequence ID" value="NC_009494.2"/>
</dbReference>
<dbReference type="SMR" id="A5IC29"/>
<dbReference type="KEGG" id="lpc:LPC_0955"/>
<dbReference type="HOGENOM" id="CLU_016922_1_5_6"/>
<dbReference type="UniPathway" id="UPA00251">
    <property type="reaction ID" value="UER00317"/>
</dbReference>
<dbReference type="GO" id="GO:0005737">
    <property type="term" value="C:cytoplasm"/>
    <property type="evidence" value="ECO:0007669"/>
    <property type="project" value="UniProtKB-SubCell"/>
</dbReference>
<dbReference type="GO" id="GO:0042286">
    <property type="term" value="F:glutamate-1-semialdehyde 2,1-aminomutase activity"/>
    <property type="evidence" value="ECO:0007669"/>
    <property type="project" value="UniProtKB-UniRule"/>
</dbReference>
<dbReference type="GO" id="GO:0030170">
    <property type="term" value="F:pyridoxal phosphate binding"/>
    <property type="evidence" value="ECO:0007669"/>
    <property type="project" value="InterPro"/>
</dbReference>
<dbReference type="GO" id="GO:0008483">
    <property type="term" value="F:transaminase activity"/>
    <property type="evidence" value="ECO:0007669"/>
    <property type="project" value="InterPro"/>
</dbReference>
<dbReference type="GO" id="GO:0006782">
    <property type="term" value="P:protoporphyrinogen IX biosynthetic process"/>
    <property type="evidence" value="ECO:0007669"/>
    <property type="project" value="UniProtKB-UniRule"/>
</dbReference>
<dbReference type="CDD" id="cd00610">
    <property type="entry name" value="OAT_like"/>
    <property type="match status" value="1"/>
</dbReference>
<dbReference type="FunFam" id="3.40.640.10:FF:000021">
    <property type="entry name" value="Glutamate-1-semialdehyde 2,1-aminomutase"/>
    <property type="match status" value="1"/>
</dbReference>
<dbReference type="Gene3D" id="3.90.1150.10">
    <property type="entry name" value="Aspartate Aminotransferase, domain 1"/>
    <property type="match status" value="1"/>
</dbReference>
<dbReference type="Gene3D" id="3.40.640.10">
    <property type="entry name" value="Type I PLP-dependent aspartate aminotransferase-like (Major domain)"/>
    <property type="match status" value="1"/>
</dbReference>
<dbReference type="HAMAP" id="MF_00375">
    <property type="entry name" value="HemL_aminotrans_3"/>
    <property type="match status" value="1"/>
</dbReference>
<dbReference type="InterPro" id="IPR004639">
    <property type="entry name" value="4pyrrol_synth_GluAld_NH2Trfase"/>
</dbReference>
<dbReference type="InterPro" id="IPR005814">
    <property type="entry name" value="Aminotrans_3"/>
</dbReference>
<dbReference type="InterPro" id="IPR049704">
    <property type="entry name" value="Aminotrans_3_PPA_site"/>
</dbReference>
<dbReference type="InterPro" id="IPR015424">
    <property type="entry name" value="PyrdxlP-dep_Trfase"/>
</dbReference>
<dbReference type="InterPro" id="IPR015421">
    <property type="entry name" value="PyrdxlP-dep_Trfase_major"/>
</dbReference>
<dbReference type="InterPro" id="IPR015422">
    <property type="entry name" value="PyrdxlP-dep_Trfase_small"/>
</dbReference>
<dbReference type="NCBIfam" id="TIGR00713">
    <property type="entry name" value="hemL"/>
    <property type="match status" value="1"/>
</dbReference>
<dbReference type="NCBIfam" id="NF000818">
    <property type="entry name" value="PRK00062.1"/>
    <property type="match status" value="1"/>
</dbReference>
<dbReference type="PANTHER" id="PTHR43713">
    <property type="entry name" value="GLUTAMATE-1-SEMIALDEHYDE 2,1-AMINOMUTASE"/>
    <property type="match status" value="1"/>
</dbReference>
<dbReference type="PANTHER" id="PTHR43713:SF3">
    <property type="entry name" value="GLUTAMATE-1-SEMIALDEHYDE 2,1-AMINOMUTASE 1, CHLOROPLASTIC-RELATED"/>
    <property type="match status" value="1"/>
</dbReference>
<dbReference type="Pfam" id="PF00202">
    <property type="entry name" value="Aminotran_3"/>
    <property type="match status" value="1"/>
</dbReference>
<dbReference type="SUPFAM" id="SSF53383">
    <property type="entry name" value="PLP-dependent transferases"/>
    <property type="match status" value="1"/>
</dbReference>
<dbReference type="PROSITE" id="PS00600">
    <property type="entry name" value="AA_TRANSFER_CLASS_3"/>
    <property type="match status" value="1"/>
</dbReference>
<gene>
    <name evidence="1" type="primary">hemL</name>
    <name type="ordered locus">LPC_0955</name>
</gene>
<comment type="catalytic activity">
    <reaction evidence="1">
        <text>(S)-4-amino-5-oxopentanoate = 5-aminolevulinate</text>
        <dbReference type="Rhea" id="RHEA:14265"/>
        <dbReference type="ChEBI" id="CHEBI:57501"/>
        <dbReference type="ChEBI" id="CHEBI:356416"/>
        <dbReference type="EC" id="5.4.3.8"/>
    </reaction>
</comment>
<comment type="cofactor">
    <cofactor evidence="1">
        <name>pyridoxal 5'-phosphate</name>
        <dbReference type="ChEBI" id="CHEBI:597326"/>
    </cofactor>
</comment>
<comment type="pathway">
    <text evidence="1">Porphyrin-containing compound metabolism; protoporphyrin-IX biosynthesis; 5-aminolevulinate from L-glutamyl-tRNA(Glu): step 2/2.</text>
</comment>
<comment type="subunit">
    <text evidence="1">Homodimer.</text>
</comment>
<comment type="subcellular location">
    <subcellularLocation>
        <location evidence="1">Cytoplasm</location>
    </subcellularLocation>
</comment>
<comment type="similarity">
    <text evidence="1">Belongs to the class-III pyridoxal-phosphate-dependent aminotransferase family. HemL subfamily.</text>
</comment>